<dbReference type="EC" id="2.7.7.7"/>
<dbReference type="EMBL" id="CU329670">
    <property type="protein sequence ID" value="CAB90776.1"/>
    <property type="molecule type" value="Genomic_DNA"/>
</dbReference>
<dbReference type="RefSeq" id="NP_594068.1">
    <property type="nucleotide sequence ID" value="NM_001019492.2"/>
</dbReference>
<dbReference type="SMR" id="Q9P6L6"/>
<dbReference type="BioGRID" id="279780">
    <property type="interactions" value="29"/>
</dbReference>
<dbReference type="FunCoup" id="Q9P6L6">
    <property type="interactions" value="393"/>
</dbReference>
<dbReference type="STRING" id="284812.Q9P6L6"/>
<dbReference type="iPTMnet" id="Q9P6L6"/>
<dbReference type="PaxDb" id="4896-SPAC688.10.1"/>
<dbReference type="EnsemblFungi" id="SPAC688.10.1">
    <property type="protein sequence ID" value="SPAC688.10.1:pep"/>
    <property type="gene ID" value="SPAC688.10"/>
</dbReference>
<dbReference type="GeneID" id="2543358"/>
<dbReference type="KEGG" id="spo:2543358"/>
<dbReference type="PomBase" id="SPAC688.10">
    <property type="gene designation" value="rev3"/>
</dbReference>
<dbReference type="VEuPathDB" id="FungiDB:SPAC688.10"/>
<dbReference type="eggNOG" id="KOG0968">
    <property type="taxonomic scope" value="Eukaryota"/>
</dbReference>
<dbReference type="HOGENOM" id="CLU_000203_3_1_1"/>
<dbReference type="InParanoid" id="Q9P6L6"/>
<dbReference type="OMA" id="RYILNLW"/>
<dbReference type="PhylomeDB" id="Q9P6L6"/>
<dbReference type="Reactome" id="R-SPO-110312">
    <property type="pathway name" value="Translesion synthesis by REV1"/>
</dbReference>
<dbReference type="Reactome" id="R-SPO-5655862">
    <property type="pathway name" value="Translesion synthesis by POLK"/>
</dbReference>
<dbReference type="Reactome" id="R-SPO-5656121">
    <property type="pathway name" value="Translesion synthesis by POLI"/>
</dbReference>
<dbReference type="PRO" id="PR:Q9P6L6"/>
<dbReference type="Proteomes" id="UP000002485">
    <property type="component" value="Chromosome I"/>
</dbReference>
<dbReference type="GO" id="GO:0000262">
    <property type="term" value="C:mitochondrial chromosome"/>
    <property type="evidence" value="ECO:0000305"/>
    <property type="project" value="PomBase"/>
</dbReference>
<dbReference type="GO" id="GO:0043596">
    <property type="term" value="C:nuclear replication fork"/>
    <property type="evidence" value="ECO:0000303"/>
    <property type="project" value="PomBase"/>
</dbReference>
<dbReference type="GO" id="GO:0005634">
    <property type="term" value="C:nucleus"/>
    <property type="evidence" value="ECO:0007005"/>
    <property type="project" value="PomBase"/>
</dbReference>
<dbReference type="GO" id="GO:0016035">
    <property type="term" value="C:zeta DNA polymerase complex"/>
    <property type="evidence" value="ECO:0000318"/>
    <property type="project" value="GO_Central"/>
</dbReference>
<dbReference type="GO" id="GO:0051539">
    <property type="term" value="F:4 iron, 4 sulfur cluster binding"/>
    <property type="evidence" value="ECO:0007669"/>
    <property type="project" value="UniProtKB-KW"/>
</dbReference>
<dbReference type="GO" id="GO:0003677">
    <property type="term" value="F:DNA binding"/>
    <property type="evidence" value="ECO:0000255"/>
    <property type="project" value="PomBase"/>
</dbReference>
<dbReference type="GO" id="GO:0003887">
    <property type="term" value="F:DNA-directed DNA polymerase activity"/>
    <property type="evidence" value="ECO:0000318"/>
    <property type="project" value="GO_Central"/>
</dbReference>
<dbReference type="GO" id="GO:0000166">
    <property type="term" value="F:nucleotide binding"/>
    <property type="evidence" value="ECO:0007669"/>
    <property type="project" value="InterPro"/>
</dbReference>
<dbReference type="GO" id="GO:0008270">
    <property type="term" value="F:zinc ion binding"/>
    <property type="evidence" value="ECO:0007669"/>
    <property type="project" value="UniProtKB-KW"/>
</dbReference>
<dbReference type="GO" id="GO:0006260">
    <property type="term" value="P:DNA replication"/>
    <property type="evidence" value="ECO:0007669"/>
    <property type="project" value="UniProtKB-KW"/>
</dbReference>
<dbReference type="GO" id="GO:0000724">
    <property type="term" value="P:double-strand break repair via homologous recombination"/>
    <property type="evidence" value="ECO:0000318"/>
    <property type="project" value="GO_Central"/>
</dbReference>
<dbReference type="GO" id="GO:0070987">
    <property type="term" value="P:error-free translesion synthesis"/>
    <property type="evidence" value="ECO:0000316"/>
    <property type="project" value="PomBase"/>
</dbReference>
<dbReference type="GO" id="GO:0042276">
    <property type="term" value="P:error-prone translesion synthesis"/>
    <property type="evidence" value="ECO:0000315"/>
    <property type="project" value="PomBase"/>
</dbReference>
<dbReference type="GO" id="GO:0043504">
    <property type="term" value="P:mitochondrial DNA repair"/>
    <property type="evidence" value="ECO:0000305"/>
    <property type="project" value="PomBase"/>
</dbReference>
<dbReference type="CDD" id="cd05778">
    <property type="entry name" value="DNA_polB_zeta_exo"/>
    <property type="match status" value="1"/>
</dbReference>
<dbReference type="CDD" id="cd05534">
    <property type="entry name" value="POLBc_zeta"/>
    <property type="match status" value="1"/>
</dbReference>
<dbReference type="FunFam" id="1.10.132.60:FF:000007">
    <property type="entry name" value="DNA polymerase"/>
    <property type="match status" value="1"/>
</dbReference>
<dbReference type="FunFam" id="3.30.342.10:FF:000018">
    <property type="entry name" value="DNA polymerase"/>
    <property type="match status" value="1"/>
</dbReference>
<dbReference type="FunFam" id="3.30.420.10:FF:000156">
    <property type="entry name" value="DNA polymerase"/>
    <property type="match status" value="1"/>
</dbReference>
<dbReference type="FunFam" id="1.10.287.690:FF:000002">
    <property type="entry name" value="DNA polymerase zeta"/>
    <property type="match status" value="1"/>
</dbReference>
<dbReference type="Gene3D" id="1.10.132.60">
    <property type="entry name" value="DNA polymerase family B, C-terminal domain"/>
    <property type="match status" value="1"/>
</dbReference>
<dbReference type="Gene3D" id="3.30.342.10">
    <property type="entry name" value="DNA Polymerase, chain B, domain 1"/>
    <property type="match status" value="1"/>
</dbReference>
<dbReference type="Gene3D" id="1.10.287.690">
    <property type="entry name" value="Helix hairpin bin"/>
    <property type="match status" value="1"/>
</dbReference>
<dbReference type="Gene3D" id="3.90.1600.10">
    <property type="entry name" value="Palm domain of DNA polymerase"/>
    <property type="match status" value="1"/>
</dbReference>
<dbReference type="Gene3D" id="3.30.420.10">
    <property type="entry name" value="Ribonuclease H-like superfamily/Ribonuclease H"/>
    <property type="match status" value="1"/>
</dbReference>
<dbReference type="InterPro" id="IPR006172">
    <property type="entry name" value="DNA-dir_DNA_pol_B"/>
</dbReference>
<dbReference type="InterPro" id="IPR017964">
    <property type="entry name" value="DNA-dir_DNA_pol_B_CS"/>
</dbReference>
<dbReference type="InterPro" id="IPR006133">
    <property type="entry name" value="DNA-dir_DNA_pol_B_exonuc"/>
</dbReference>
<dbReference type="InterPro" id="IPR006134">
    <property type="entry name" value="DNA-dir_DNA_pol_B_multi_dom"/>
</dbReference>
<dbReference type="InterPro" id="IPR043502">
    <property type="entry name" value="DNA/RNA_pol_sf"/>
</dbReference>
<dbReference type="InterPro" id="IPR042087">
    <property type="entry name" value="DNA_pol_B_thumb"/>
</dbReference>
<dbReference type="InterPro" id="IPR023211">
    <property type="entry name" value="DNA_pol_palm_dom_sf"/>
</dbReference>
<dbReference type="InterPro" id="IPR056435">
    <property type="entry name" value="DPOD/Z_N"/>
</dbReference>
<dbReference type="InterPro" id="IPR030559">
    <property type="entry name" value="PolZ_Rev3"/>
</dbReference>
<dbReference type="InterPro" id="IPR012337">
    <property type="entry name" value="RNaseH-like_sf"/>
</dbReference>
<dbReference type="InterPro" id="IPR036397">
    <property type="entry name" value="RNaseH_sf"/>
</dbReference>
<dbReference type="InterPro" id="IPR025687">
    <property type="entry name" value="Znf-C4pol"/>
</dbReference>
<dbReference type="PANTHER" id="PTHR45812">
    <property type="entry name" value="DNA POLYMERASE ZETA CATALYTIC SUBUNIT"/>
    <property type="match status" value="1"/>
</dbReference>
<dbReference type="PANTHER" id="PTHR45812:SF1">
    <property type="entry name" value="DNA POLYMERASE ZETA CATALYTIC SUBUNIT"/>
    <property type="match status" value="1"/>
</dbReference>
<dbReference type="Pfam" id="PF00136">
    <property type="entry name" value="DNA_pol_B"/>
    <property type="match status" value="1"/>
</dbReference>
<dbReference type="Pfam" id="PF03104">
    <property type="entry name" value="DNA_pol_B_exo1"/>
    <property type="match status" value="1"/>
</dbReference>
<dbReference type="Pfam" id="PF24055">
    <property type="entry name" value="POL3_N"/>
    <property type="match status" value="1"/>
</dbReference>
<dbReference type="Pfam" id="PF14260">
    <property type="entry name" value="zf-C4pol"/>
    <property type="match status" value="1"/>
</dbReference>
<dbReference type="PRINTS" id="PR00106">
    <property type="entry name" value="DNAPOLB"/>
</dbReference>
<dbReference type="SMART" id="SM00486">
    <property type="entry name" value="POLBc"/>
    <property type="match status" value="1"/>
</dbReference>
<dbReference type="SUPFAM" id="SSF56672">
    <property type="entry name" value="DNA/RNA polymerases"/>
    <property type="match status" value="1"/>
</dbReference>
<dbReference type="SUPFAM" id="SSF53098">
    <property type="entry name" value="Ribonuclease H-like"/>
    <property type="match status" value="1"/>
</dbReference>
<dbReference type="PROSITE" id="PS00116">
    <property type="entry name" value="DNA_POLYMERASE_B"/>
    <property type="match status" value="1"/>
</dbReference>
<accession>Q9P6L6</accession>
<protein>
    <recommendedName>
        <fullName>DNA polymerase zeta catalytic subunit</fullName>
        <ecNumber>2.7.7.7</ecNumber>
    </recommendedName>
    <alternativeName>
        <fullName>Protein reversionless 3</fullName>
    </alternativeName>
</protein>
<comment type="function">
    <text evidence="2">Nonessential DNA polymerase. Required for DNA damage induced mutagenesis. Involved in DNA repair, mitochondrial DNA repair and translesion synthesis. Has a role in the bypass of abasic (AP) sites (By similarity).</text>
</comment>
<comment type="catalytic activity">
    <reaction evidence="2">
        <text>DNA(n) + a 2'-deoxyribonucleoside 5'-triphosphate = DNA(n+1) + diphosphate</text>
        <dbReference type="Rhea" id="RHEA:22508"/>
        <dbReference type="Rhea" id="RHEA-COMP:17339"/>
        <dbReference type="Rhea" id="RHEA-COMP:17340"/>
        <dbReference type="ChEBI" id="CHEBI:33019"/>
        <dbReference type="ChEBI" id="CHEBI:61560"/>
        <dbReference type="ChEBI" id="CHEBI:173112"/>
        <dbReference type="EC" id="2.7.7.7"/>
    </reaction>
</comment>
<comment type="cofactor">
    <cofactor evidence="1">
        <name>[4Fe-4S] cluster</name>
        <dbReference type="ChEBI" id="CHEBI:49883"/>
    </cofactor>
    <text evidence="1">Binds 1 [4Fe-4S] cluster.</text>
</comment>
<comment type="subunit">
    <text evidence="2">Forms DNA polymerase zeta with rev7.</text>
</comment>
<comment type="subcellular location">
    <subcellularLocation>
        <location evidence="5">Mitochondrion</location>
    </subcellularLocation>
    <subcellularLocation>
        <location evidence="5">Nucleus</location>
    </subcellularLocation>
</comment>
<comment type="domain">
    <text evidence="1">The CysB motif binds 1 4Fe-4S cluster and is required for the formation of polymerase complexes.</text>
</comment>
<comment type="similarity">
    <text evidence="3">Belongs to the DNA polymerase type-B family.</text>
</comment>
<reference evidence="7" key="1">
    <citation type="journal article" date="2002" name="Nature">
        <title>The genome sequence of Schizosaccharomyces pombe.</title>
        <authorList>
            <person name="Wood V."/>
            <person name="Gwilliam R."/>
            <person name="Rajandream M.A."/>
            <person name="Lyne M.H."/>
            <person name="Lyne R."/>
            <person name="Stewart A."/>
            <person name="Sgouros J.G."/>
            <person name="Peat N."/>
            <person name="Hayles J."/>
            <person name="Baker S.G."/>
            <person name="Basham D."/>
            <person name="Bowman S."/>
            <person name="Brooks K."/>
            <person name="Brown D."/>
            <person name="Brown S."/>
            <person name="Chillingworth T."/>
            <person name="Churcher C.M."/>
            <person name="Collins M."/>
            <person name="Connor R."/>
            <person name="Cronin A."/>
            <person name="Davis P."/>
            <person name="Feltwell T."/>
            <person name="Fraser A."/>
            <person name="Gentles S."/>
            <person name="Goble A."/>
            <person name="Hamlin N."/>
            <person name="Harris D.E."/>
            <person name="Hidalgo J."/>
            <person name="Hodgson G."/>
            <person name="Holroyd S."/>
            <person name="Hornsby T."/>
            <person name="Howarth S."/>
            <person name="Huckle E.J."/>
            <person name="Hunt S."/>
            <person name="Jagels K."/>
            <person name="James K.D."/>
            <person name="Jones L."/>
            <person name="Jones M."/>
            <person name="Leather S."/>
            <person name="McDonald S."/>
            <person name="McLean J."/>
            <person name="Mooney P."/>
            <person name="Moule S."/>
            <person name="Mungall K.L."/>
            <person name="Murphy L.D."/>
            <person name="Niblett D."/>
            <person name="Odell C."/>
            <person name="Oliver K."/>
            <person name="O'Neil S."/>
            <person name="Pearson D."/>
            <person name="Quail M.A."/>
            <person name="Rabbinowitsch E."/>
            <person name="Rutherford K.M."/>
            <person name="Rutter S."/>
            <person name="Saunders D."/>
            <person name="Seeger K."/>
            <person name="Sharp S."/>
            <person name="Skelton J."/>
            <person name="Simmonds M.N."/>
            <person name="Squares R."/>
            <person name="Squares S."/>
            <person name="Stevens K."/>
            <person name="Taylor K."/>
            <person name="Taylor R.G."/>
            <person name="Tivey A."/>
            <person name="Walsh S.V."/>
            <person name="Warren T."/>
            <person name="Whitehead S."/>
            <person name="Woodward J.R."/>
            <person name="Volckaert G."/>
            <person name="Aert R."/>
            <person name="Robben J."/>
            <person name="Grymonprez B."/>
            <person name="Weltjens I."/>
            <person name="Vanstreels E."/>
            <person name="Rieger M."/>
            <person name="Schaefer M."/>
            <person name="Mueller-Auer S."/>
            <person name="Gabel C."/>
            <person name="Fuchs M."/>
            <person name="Duesterhoeft A."/>
            <person name="Fritzc C."/>
            <person name="Holzer E."/>
            <person name="Moestl D."/>
            <person name="Hilbert H."/>
            <person name="Borzym K."/>
            <person name="Langer I."/>
            <person name="Beck A."/>
            <person name="Lehrach H."/>
            <person name="Reinhardt R."/>
            <person name="Pohl T.M."/>
            <person name="Eger P."/>
            <person name="Zimmermann W."/>
            <person name="Wedler H."/>
            <person name="Wambutt R."/>
            <person name="Purnelle B."/>
            <person name="Goffeau A."/>
            <person name="Cadieu E."/>
            <person name="Dreano S."/>
            <person name="Gloux S."/>
            <person name="Lelaure V."/>
            <person name="Mottier S."/>
            <person name="Galibert F."/>
            <person name="Aves S.J."/>
            <person name="Xiang Z."/>
            <person name="Hunt C."/>
            <person name="Moore K."/>
            <person name="Hurst S.M."/>
            <person name="Lucas M."/>
            <person name="Rochet M."/>
            <person name="Gaillardin C."/>
            <person name="Tallada V.A."/>
            <person name="Garzon A."/>
            <person name="Thode G."/>
            <person name="Daga R.R."/>
            <person name="Cruzado L."/>
            <person name="Jimenez J."/>
            <person name="Sanchez M."/>
            <person name="del Rey F."/>
            <person name="Benito J."/>
            <person name="Dominguez A."/>
            <person name="Revuelta J.L."/>
            <person name="Moreno S."/>
            <person name="Armstrong J."/>
            <person name="Forsburg S.L."/>
            <person name="Cerutti L."/>
            <person name="Lowe T."/>
            <person name="McCombie W.R."/>
            <person name="Paulsen I."/>
            <person name="Potashkin J."/>
            <person name="Shpakovski G.V."/>
            <person name="Ussery D."/>
            <person name="Barrell B.G."/>
            <person name="Nurse P."/>
        </authorList>
    </citation>
    <scope>NUCLEOTIDE SEQUENCE [LARGE SCALE GENOMIC DNA]</scope>
    <source>
        <strain>972 / ATCC 24843</strain>
    </source>
</reference>
<reference evidence="6" key="2">
    <citation type="journal article" date="2006" name="Nat. Biotechnol.">
        <title>ORFeome cloning and global analysis of protein localization in the fission yeast Schizosaccharomyces pombe.</title>
        <authorList>
            <person name="Matsuyama A."/>
            <person name="Arai R."/>
            <person name="Yashiroda Y."/>
            <person name="Shirai A."/>
            <person name="Kamata A."/>
            <person name="Sekido S."/>
            <person name="Kobayashi Y."/>
            <person name="Hashimoto A."/>
            <person name="Hamamoto M."/>
            <person name="Hiraoka Y."/>
            <person name="Horinouchi S."/>
            <person name="Yoshida M."/>
        </authorList>
    </citation>
    <scope>SUBCELLULAR LOCATION [LARGE SCALE ANALYSIS]</scope>
</reference>
<gene>
    <name type="primary">rev3</name>
    <name type="ORF">SPAC688.10</name>
</gene>
<feature type="chain" id="PRO_0000361055" description="DNA polymerase zeta catalytic subunit">
    <location>
        <begin position="1"/>
        <end position="1480"/>
    </location>
</feature>
<feature type="zinc finger region" description="CysA-type">
    <location>
        <begin position="1381"/>
        <end position="1403"/>
    </location>
</feature>
<feature type="region of interest" description="Disordered" evidence="4">
    <location>
        <begin position="403"/>
        <end position="488"/>
    </location>
</feature>
<feature type="short sequence motif" description="CysB motif">
    <location>
        <begin position="1432"/>
        <end position="1451"/>
    </location>
</feature>
<feature type="compositionally biased region" description="Polar residues" evidence="4">
    <location>
        <begin position="411"/>
        <end position="427"/>
    </location>
</feature>
<feature type="compositionally biased region" description="Basic and acidic residues" evidence="4">
    <location>
        <begin position="457"/>
        <end position="468"/>
    </location>
</feature>
<feature type="compositionally biased region" description="Polar residues" evidence="4">
    <location>
        <begin position="470"/>
        <end position="479"/>
    </location>
</feature>
<feature type="binding site" evidence="1">
    <location>
        <position position="1381"/>
    </location>
    <ligand>
        <name>Zn(2+)</name>
        <dbReference type="ChEBI" id="CHEBI:29105"/>
    </ligand>
</feature>
<feature type="binding site" evidence="1">
    <location>
        <position position="1384"/>
    </location>
    <ligand>
        <name>Zn(2+)</name>
        <dbReference type="ChEBI" id="CHEBI:29105"/>
    </ligand>
</feature>
<feature type="binding site" evidence="1">
    <location>
        <position position="1400"/>
    </location>
    <ligand>
        <name>Zn(2+)</name>
        <dbReference type="ChEBI" id="CHEBI:29105"/>
    </ligand>
</feature>
<feature type="binding site" evidence="1">
    <location>
        <position position="1403"/>
    </location>
    <ligand>
        <name>Zn(2+)</name>
        <dbReference type="ChEBI" id="CHEBI:29105"/>
    </ligand>
</feature>
<feature type="binding site" evidence="1">
    <location>
        <position position="1432"/>
    </location>
    <ligand>
        <name>[4Fe-4S] cluster</name>
        <dbReference type="ChEBI" id="CHEBI:49883"/>
    </ligand>
</feature>
<feature type="binding site" evidence="1">
    <location>
        <position position="1435"/>
    </location>
    <ligand>
        <name>[4Fe-4S] cluster</name>
        <dbReference type="ChEBI" id="CHEBI:49883"/>
    </ligand>
</feature>
<feature type="binding site" evidence="1">
    <location>
        <position position="1446"/>
    </location>
    <ligand>
        <name>[4Fe-4S] cluster</name>
        <dbReference type="ChEBI" id="CHEBI:49883"/>
    </ligand>
</feature>
<feature type="binding site" evidence="1">
    <location>
        <position position="1451"/>
    </location>
    <ligand>
        <name>[4Fe-4S] cluster</name>
        <dbReference type="ChEBI" id="CHEBI:49883"/>
    </ligand>
</feature>
<evidence type="ECO:0000250" key="1"/>
<evidence type="ECO:0000250" key="2">
    <source>
        <dbReference type="UniProtKB" id="P14284"/>
    </source>
</evidence>
<evidence type="ECO:0000255" key="3"/>
<evidence type="ECO:0000256" key="4">
    <source>
        <dbReference type="SAM" id="MobiDB-lite"/>
    </source>
</evidence>
<evidence type="ECO:0000269" key="5">
    <source>
    </source>
</evidence>
<evidence type="ECO:0000305" key="6"/>
<evidence type="ECO:0000312" key="7">
    <source>
        <dbReference type="EMBL" id="CAB90776.1"/>
    </source>
</evidence>
<keyword id="KW-0004">4Fe-4S</keyword>
<keyword id="KW-0227">DNA damage</keyword>
<keyword id="KW-0234">DNA repair</keyword>
<keyword id="KW-0235">DNA replication</keyword>
<keyword id="KW-0238">DNA-binding</keyword>
<keyword id="KW-0239">DNA-directed DNA polymerase</keyword>
<keyword id="KW-0408">Iron</keyword>
<keyword id="KW-0411">Iron-sulfur</keyword>
<keyword id="KW-0479">Metal-binding</keyword>
<keyword id="KW-0496">Mitochondrion</keyword>
<keyword id="KW-0548">Nucleotidyltransferase</keyword>
<keyword id="KW-0539">Nucleus</keyword>
<keyword id="KW-1185">Reference proteome</keyword>
<keyword id="KW-0808">Transferase</keyword>
<keyword id="KW-0862">Zinc</keyword>
<keyword id="KW-0863">Zinc-finger</keyword>
<name>DPOZ_SCHPO</name>
<organism>
    <name type="scientific">Schizosaccharomyces pombe (strain 972 / ATCC 24843)</name>
    <name type="common">Fission yeast</name>
    <dbReference type="NCBI Taxonomy" id="284812"/>
    <lineage>
        <taxon>Eukaryota</taxon>
        <taxon>Fungi</taxon>
        <taxon>Dikarya</taxon>
        <taxon>Ascomycota</taxon>
        <taxon>Taphrinomycotina</taxon>
        <taxon>Schizosaccharomycetes</taxon>
        <taxon>Schizosaccharomycetales</taxon>
        <taxon>Schizosaccharomycetaceae</taxon>
        <taxon>Schizosaccharomyces</taxon>
    </lineage>
</organism>
<sequence length="1480" mass="168290">MRFSIEYIDWELSPCDPAYDFVGKDLPTANEELTTVPVIRVFGLNEEAETVCCFIHNVFPYIYVEYSSFAETLDLEVPDFLSQLQTSINYALALAARANPETYKPAVQSVQLVKGIPFYGYSFCFQKFLKICLFSPKNRDRLVDLFRQGAILNKVIQVYESHLPYLLQFMVDHNLYGCAPIDLDDSIIKRDDLLSFCNVEVHVSPNAILNACWLSERNIHTDLYETHASSPNSLLVTSLAEIWKSEASRRNLTSSDETNSFSKLHQSQFGLKEESSHEPRSSQHWKNEVAMKDLLKNLIKSKLESSSDVNTPLIFDPWPELPTIYSAIHTKDYVRPSQNDISVSQISVDEKICTSYESLPKIQLEQNTAPVIESSFEQLDSELERILGDTLFDSFPYVEPNVDRSKFPKSPLNSSQEVTIHSSQDRQSPPSSPLKDVPSQINPFSPSLRLKGGSPITKREIEFCRDLPNRPTSSEPNQGDTRKAGKRLKYSRNLDDYHICTQIPEDYSPKFLSQHESFVYKQQPPSTDDLYGTMKKLKIPFSIPTNVHYSSEKDIPSYSQEYLGKSHYPIGVSSRYLPEFQSDGSVSEKVRLNPLKLSNFHGERTWQYIKPAPLAVDLSNLESKEAVSEEIQSPQRLSRSKVFRKDPYSCVRILALELFCCSHGGLTPDPTKDSIECCFWAYQEDVNSSMIDRVGFIVVDKSASNSSFGRSFPSCTVLVVNSELELINEVIGLNRQLDPTIVCGYEVHNSSWGYLIERASYRFNYDLPEQLSRLKCTSKANFAKKENAWKYTTTSSINIVGRHVLNIWRILRGEVNLLNYSLENVVLNIFKKQTPYYNQADKVHLWQSSRFHEKQILLNYMLNRTRYCLEILSACAIVTKIREQARIIGIDFMSVISRGSQFKVESIMFRIAKPENYIFPSPSAKQVAEQNALEALPLVMEPKSDLYNNPVVVLDFQSLYPSIIIAYNLCYSTCLGPVKIVNGKVKLGFMFHSSNPNIVNLIKNDVYISPNGYAYVKENVRKSLLAKMLEELIETRNMVKRGMKDCDSDYVNKVLNSRQLALKLIANVTYGYTSASFSGRMPCSEIADTIVETGREILSYSLEYINTLDFCHAKVVYGDTDSLFVELPGATKEQAFDIGQQLANNITSRFPSPIRLKFEKIYFPCFLLAKKRYVGFKFESVSQKAPIFEAKGIETVRRDGTPVQQQLLRRCLEILFKTKDLSTVKKEFQNVCYQIMSGNVPVMDFCFSKEVRLEKYKELSTAPPGAVMARRLMTKDPRREPQYGERVPYLIIAAAPGTTLANRSVAPEEFLSSSFSQLDINYYINNSLIPPLDRFLNLLGASAQSWYHEMPKPRTSLKLTETVKGGIQKKTLDTFLMEKLCSSCLKNNIEIIPDKINSLCSDCLKNPCATISKAVTQHNAYNKKLSLLFDICRGCSKLSSSDPVLCKSNSCKVYYDRAKTENYAKVQAEMLTKTLGSLDW</sequence>
<proteinExistence type="inferred from homology"/>